<proteinExistence type="inferred from homology"/>
<accession>Q5GWR5</accession>
<sequence length="211" mass="23378">MAKTHEIKAERRADEGKGASRRLRHAGVIPAIVYGGELEPVSIQLNHEQIWLAQQNEWFYSSILDLNLNGDVQQVLLRDIQRHPFKQLIMHIDFQRVSANQKLSAAVPLHFINEEASPAGKSSEVVVTHELNEVQVVCLPKDLPEFIEVDLGALEVGNVIHLSEIKLPAGVEIPELKLGKERDVAVVAAKHVRIQEEDAAGEEGSEGAETK</sequence>
<name>RL25_XANOR</name>
<reference key="1">
    <citation type="journal article" date="2005" name="Nucleic Acids Res.">
        <title>The genome sequence of Xanthomonas oryzae pathovar oryzae KACC10331, the bacterial blight pathogen of rice.</title>
        <authorList>
            <person name="Lee B.-M."/>
            <person name="Park Y.-J."/>
            <person name="Park D.-S."/>
            <person name="Kang H.-W."/>
            <person name="Kim J.-G."/>
            <person name="Song E.-S."/>
            <person name="Park I.-C."/>
            <person name="Yoon U.-H."/>
            <person name="Hahn J.-H."/>
            <person name="Koo B.-S."/>
            <person name="Lee G.-B."/>
            <person name="Kim H."/>
            <person name="Park H.-S."/>
            <person name="Yoon K.-O."/>
            <person name="Kim J.-H."/>
            <person name="Jung C.-H."/>
            <person name="Koh N.-H."/>
            <person name="Seo J.-S."/>
            <person name="Go S.-J."/>
        </authorList>
    </citation>
    <scope>NUCLEOTIDE SEQUENCE [LARGE SCALE GENOMIC DNA]</scope>
    <source>
        <strain>KACC10331 / KXO85</strain>
    </source>
</reference>
<protein>
    <recommendedName>
        <fullName evidence="1">Large ribosomal subunit protein bL25</fullName>
    </recommendedName>
    <alternativeName>
        <fullName evidence="3">50S ribosomal protein L25</fullName>
    </alternativeName>
    <alternativeName>
        <fullName evidence="1">General stress protein CTC</fullName>
    </alternativeName>
</protein>
<gene>
    <name evidence="1" type="primary">rplY</name>
    <name evidence="1" type="synonym">ctc</name>
    <name type="ordered locus">XOO3602</name>
</gene>
<organism>
    <name type="scientific">Xanthomonas oryzae pv. oryzae (strain KACC10331 / KXO85)</name>
    <dbReference type="NCBI Taxonomy" id="291331"/>
    <lineage>
        <taxon>Bacteria</taxon>
        <taxon>Pseudomonadati</taxon>
        <taxon>Pseudomonadota</taxon>
        <taxon>Gammaproteobacteria</taxon>
        <taxon>Lysobacterales</taxon>
        <taxon>Lysobacteraceae</taxon>
        <taxon>Xanthomonas</taxon>
    </lineage>
</organism>
<feature type="chain" id="PRO_0000181620" description="Large ribosomal subunit protein bL25">
    <location>
        <begin position="1"/>
        <end position="211"/>
    </location>
</feature>
<feature type="region of interest" description="Disordered" evidence="2">
    <location>
        <begin position="1"/>
        <end position="20"/>
    </location>
</feature>
<feature type="compositionally biased region" description="Basic and acidic residues" evidence="2">
    <location>
        <begin position="1"/>
        <end position="18"/>
    </location>
</feature>
<dbReference type="EMBL" id="AE013598">
    <property type="protein sequence ID" value="AAW76856.1"/>
    <property type="molecule type" value="Genomic_DNA"/>
</dbReference>
<dbReference type="SMR" id="Q5GWR5"/>
<dbReference type="STRING" id="291331.XOO3602"/>
<dbReference type="KEGG" id="xoo:XOO3602"/>
<dbReference type="HOGENOM" id="CLU_075939_0_1_6"/>
<dbReference type="Proteomes" id="UP000006735">
    <property type="component" value="Chromosome"/>
</dbReference>
<dbReference type="GO" id="GO:0022625">
    <property type="term" value="C:cytosolic large ribosomal subunit"/>
    <property type="evidence" value="ECO:0007669"/>
    <property type="project" value="TreeGrafter"/>
</dbReference>
<dbReference type="GO" id="GO:0008097">
    <property type="term" value="F:5S rRNA binding"/>
    <property type="evidence" value="ECO:0007669"/>
    <property type="project" value="InterPro"/>
</dbReference>
<dbReference type="GO" id="GO:0003735">
    <property type="term" value="F:structural constituent of ribosome"/>
    <property type="evidence" value="ECO:0007669"/>
    <property type="project" value="InterPro"/>
</dbReference>
<dbReference type="GO" id="GO:0006412">
    <property type="term" value="P:translation"/>
    <property type="evidence" value="ECO:0007669"/>
    <property type="project" value="UniProtKB-UniRule"/>
</dbReference>
<dbReference type="CDD" id="cd00495">
    <property type="entry name" value="Ribosomal_L25_TL5_CTC"/>
    <property type="match status" value="1"/>
</dbReference>
<dbReference type="FunFam" id="2.40.240.10:FF:000002">
    <property type="entry name" value="50S ribosomal protein L25"/>
    <property type="match status" value="1"/>
</dbReference>
<dbReference type="Gene3D" id="2.170.120.20">
    <property type="entry name" value="Ribosomal protein L25, beta domain"/>
    <property type="match status" value="1"/>
</dbReference>
<dbReference type="Gene3D" id="2.40.240.10">
    <property type="entry name" value="Ribosomal Protein L25, Chain P"/>
    <property type="match status" value="1"/>
</dbReference>
<dbReference type="HAMAP" id="MF_01336">
    <property type="entry name" value="Ribosomal_bL25"/>
    <property type="match status" value="1"/>
</dbReference>
<dbReference type="HAMAP" id="MF_01334">
    <property type="entry name" value="Ribosomal_bL25_CTC"/>
    <property type="match status" value="1"/>
</dbReference>
<dbReference type="InterPro" id="IPR020056">
    <property type="entry name" value="Rbsml_bL25/Gln-tRNA_synth_N"/>
</dbReference>
<dbReference type="InterPro" id="IPR011035">
    <property type="entry name" value="Ribosomal_bL25/Gln-tRNA_synth"/>
</dbReference>
<dbReference type="InterPro" id="IPR020057">
    <property type="entry name" value="Ribosomal_bL25_b-dom"/>
</dbReference>
<dbReference type="InterPro" id="IPR037121">
    <property type="entry name" value="Ribosomal_bL25_C"/>
</dbReference>
<dbReference type="InterPro" id="IPR001021">
    <property type="entry name" value="Ribosomal_bL25_long"/>
</dbReference>
<dbReference type="InterPro" id="IPR020055">
    <property type="entry name" value="Ribosomal_bL25_short"/>
</dbReference>
<dbReference type="InterPro" id="IPR029751">
    <property type="entry name" value="Ribosomal_L25_dom"/>
</dbReference>
<dbReference type="InterPro" id="IPR020930">
    <property type="entry name" value="Ribosomal_uL5_bac-type"/>
</dbReference>
<dbReference type="NCBIfam" id="TIGR00731">
    <property type="entry name" value="bL25_bact_ctc"/>
    <property type="match status" value="1"/>
</dbReference>
<dbReference type="NCBIfam" id="NF004128">
    <property type="entry name" value="PRK05618.1-2"/>
    <property type="match status" value="1"/>
</dbReference>
<dbReference type="NCBIfam" id="NF004130">
    <property type="entry name" value="PRK05618.1-5"/>
    <property type="match status" value="1"/>
</dbReference>
<dbReference type="NCBIfam" id="NF004612">
    <property type="entry name" value="PRK05943.1"/>
    <property type="match status" value="1"/>
</dbReference>
<dbReference type="PANTHER" id="PTHR33284">
    <property type="entry name" value="RIBOSOMAL PROTEIN L25/GLN-TRNA SYNTHETASE, ANTI-CODON-BINDING DOMAIN-CONTAINING PROTEIN"/>
    <property type="match status" value="1"/>
</dbReference>
<dbReference type="PANTHER" id="PTHR33284:SF1">
    <property type="entry name" value="RIBOSOMAL PROTEIN L25_GLN-TRNA SYNTHETASE, ANTI-CODON-BINDING DOMAIN-CONTAINING PROTEIN"/>
    <property type="match status" value="1"/>
</dbReference>
<dbReference type="Pfam" id="PF01386">
    <property type="entry name" value="Ribosomal_L25p"/>
    <property type="match status" value="1"/>
</dbReference>
<dbReference type="Pfam" id="PF14693">
    <property type="entry name" value="Ribosomal_TL5_C"/>
    <property type="match status" value="1"/>
</dbReference>
<dbReference type="SUPFAM" id="SSF50715">
    <property type="entry name" value="Ribosomal protein L25-like"/>
    <property type="match status" value="1"/>
</dbReference>
<comment type="function">
    <text evidence="1">This is one of the proteins that binds to the 5S RNA in the ribosome where it forms part of the central protuberance.</text>
</comment>
<comment type="subunit">
    <text evidence="1">Part of the 50S ribosomal subunit; part of the 5S rRNA/L5/L18/L25 subcomplex. Contacts the 5S rRNA. Binds to the 5S rRNA independently of L5 and L18.</text>
</comment>
<comment type="similarity">
    <text evidence="1">Belongs to the bacterial ribosomal protein bL25 family. CTC subfamily.</text>
</comment>
<keyword id="KW-1185">Reference proteome</keyword>
<keyword id="KW-0687">Ribonucleoprotein</keyword>
<keyword id="KW-0689">Ribosomal protein</keyword>
<keyword id="KW-0694">RNA-binding</keyword>
<keyword id="KW-0699">rRNA-binding</keyword>
<evidence type="ECO:0000255" key="1">
    <source>
        <dbReference type="HAMAP-Rule" id="MF_01334"/>
    </source>
</evidence>
<evidence type="ECO:0000256" key="2">
    <source>
        <dbReference type="SAM" id="MobiDB-lite"/>
    </source>
</evidence>
<evidence type="ECO:0000305" key="3"/>